<protein>
    <recommendedName>
        <fullName evidence="5">Enolase</fullName>
        <ecNumber evidence="4">4.2.1.11</ecNumber>
    </recommendedName>
    <alternativeName>
        <fullName evidence="6">2-phospho-D-glycerate hydro-lyase</fullName>
    </alternativeName>
    <alternativeName>
        <fullName evidence="6">2-phosphoglycerate dehydratase</fullName>
    </alternativeName>
</protein>
<feature type="chain" id="PRO_0000134091" description="Enolase">
    <location>
        <begin position="1"/>
        <end position="446"/>
    </location>
</feature>
<feature type="short sequence motif" description="Pentapeptide insert" evidence="3">
    <location>
        <begin position="104"/>
        <end position="108"/>
    </location>
</feature>
<feature type="short sequence motif" description="DKSLVK motif" evidence="4">
    <location>
        <begin position="277"/>
        <end position="282"/>
    </location>
</feature>
<feature type="active site" description="Proton donor" evidence="1">
    <location>
        <position position="218"/>
    </location>
</feature>
<feature type="active site" description="Proton acceptor" evidence="1">
    <location>
        <position position="356"/>
    </location>
</feature>
<feature type="binding site" evidence="1">
    <location>
        <position position="42"/>
    </location>
    <ligand>
        <name>Mg(2+)</name>
        <dbReference type="ChEBI" id="CHEBI:18420"/>
        <label>1</label>
    </ligand>
</feature>
<feature type="binding site" evidence="1">
    <location>
        <position position="166"/>
    </location>
    <ligand>
        <name>substrate</name>
    </ligand>
</feature>
<feature type="binding site" evidence="1">
    <location>
        <position position="175"/>
    </location>
    <ligand>
        <name>substrate</name>
    </ligand>
</feature>
<feature type="binding site" evidence="1">
    <location>
        <position position="253"/>
    </location>
    <ligand>
        <name>Mg(2+)</name>
        <dbReference type="ChEBI" id="CHEBI:18420"/>
        <label>2</label>
    </ligand>
</feature>
<feature type="binding site" evidence="1">
    <location>
        <position position="304"/>
    </location>
    <ligand>
        <name>Mg(2+)</name>
        <dbReference type="ChEBI" id="CHEBI:18420"/>
        <label>2</label>
    </ligand>
</feature>
<feature type="binding site" evidence="1">
    <location>
        <position position="304"/>
    </location>
    <ligand>
        <name>substrate</name>
    </ligand>
</feature>
<feature type="binding site" evidence="1">
    <location>
        <position position="331"/>
    </location>
    <ligand>
        <name>Mg(2+)</name>
        <dbReference type="ChEBI" id="CHEBI:18420"/>
        <label>2</label>
    </ligand>
</feature>
<feature type="binding site" evidence="1">
    <location>
        <position position="331"/>
    </location>
    <ligand>
        <name>substrate</name>
    </ligand>
</feature>
<feature type="binding site" evidence="1">
    <location>
        <begin position="383"/>
        <end position="386"/>
    </location>
    <ligand>
        <name>substrate</name>
    </ligand>
</feature>
<feature type="binding site" evidence="1">
    <location>
        <position position="407"/>
    </location>
    <ligand>
        <name>substrate</name>
    </ligand>
</feature>
<feature type="modified residue" description="Phosphoserine" evidence="3">
    <location>
        <position position="42"/>
    </location>
</feature>
<feature type="modified residue" description="N6-acetyllysine" evidence="2">
    <location>
        <position position="133"/>
    </location>
</feature>
<feature type="modified residue" description="Phosphotyrosine" evidence="2">
    <location>
        <position position="139"/>
    </location>
</feature>
<feature type="modified residue" description="Phosphothreonine" evidence="2">
    <location>
        <position position="339"/>
    </location>
</feature>
<feature type="modified residue" description="N6-acetyllysine" evidence="2">
    <location>
        <position position="375"/>
    </location>
</feature>
<feature type="cross-link" description="Glycyl lysine isopeptide (Lys-Gly) (interchain with G-Cter in ubiquitin)" evidence="2">
    <location>
        <position position="138"/>
    </location>
</feature>
<gene>
    <name evidence="3" type="primary">ENO</name>
</gene>
<dbReference type="EC" id="4.2.1.11" evidence="4"/>
<dbReference type="EMBL" id="AB026051">
    <property type="protein sequence ID" value="BAA76924.1"/>
    <property type="molecule type" value="mRNA"/>
</dbReference>
<dbReference type="SMR" id="Q9UAL5"/>
<dbReference type="UniPathway" id="UPA00109">
    <property type="reaction ID" value="UER00187"/>
</dbReference>
<dbReference type="GO" id="GO:0009986">
    <property type="term" value="C:cell surface"/>
    <property type="evidence" value="ECO:0007669"/>
    <property type="project" value="UniProtKB-SubCell"/>
</dbReference>
<dbReference type="GO" id="GO:0005856">
    <property type="term" value="C:cytoskeleton"/>
    <property type="evidence" value="ECO:0007669"/>
    <property type="project" value="UniProtKB-SubCell"/>
</dbReference>
<dbReference type="GO" id="GO:0005634">
    <property type="term" value="C:nucleus"/>
    <property type="evidence" value="ECO:0007669"/>
    <property type="project" value="UniProtKB-SubCell"/>
</dbReference>
<dbReference type="GO" id="GO:0000015">
    <property type="term" value="C:phosphopyruvate hydratase complex"/>
    <property type="evidence" value="ECO:0007669"/>
    <property type="project" value="InterPro"/>
</dbReference>
<dbReference type="GO" id="GO:0005886">
    <property type="term" value="C:plasma membrane"/>
    <property type="evidence" value="ECO:0007669"/>
    <property type="project" value="UniProtKB-SubCell"/>
</dbReference>
<dbReference type="GO" id="GO:0005773">
    <property type="term" value="C:vacuole"/>
    <property type="evidence" value="ECO:0007669"/>
    <property type="project" value="UniProtKB-SubCell"/>
</dbReference>
<dbReference type="GO" id="GO:0000287">
    <property type="term" value="F:magnesium ion binding"/>
    <property type="evidence" value="ECO:0007669"/>
    <property type="project" value="InterPro"/>
</dbReference>
<dbReference type="GO" id="GO:0004634">
    <property type="term" value="F:phosphopyruvate hydratase activity"/>
    <property type="evidence" value="ECO:0007669"/>
    <property type="project" value="UniProtKB-EC"/>
</dbReference>
<dbReference type="GO" id="GO:0006096">
    <property type="term" value="P:glycolytic process"/>
    <property type="evidence" value="ECO:0007669"/>
    <property type="project" value="UniProtKB-UniPathway"/>
</dbReference>
<dbReference type="CDD" id="cd03313">
    <property type="entry name" value="enolase"/>
    <property type="match status" value="1"/>
</dbReference>
<dbReference type="FunFam" id="3.30.390.10:FF:000001">
    <property type="entry name" value="Enolase"/>
    <property type="match status" value="1"/>
</dbReference>
<dbReference type="FunFam" id="3.20.20.120:FF:000002">
    <property type="entry name" value="Enolase 1"/>
    <property type="match status" value="1"/>
</dbReference>
<dbReference type="Gene3D" id="3.20.20.120">
    <property type="entry name" value="Enolase-like C-terminal domain"/>
    <property type="match status" value="1"/>
</dbReference>
<dbReference type="Gene3D" id="3.30.390.10">
    <property type="entry name" value="Enolase-like, N-terminal domain"/>
    <property type="match status" value="1"/>
</dbReference>
<dbReference type="HAMAP" id="MF_00318">
    <property type="entry name" value="Enolase"/>
    <property type="match status" value="1"/>
</dbReference>
<dbReference type="InterPro" id="IPR000941">
    <property type="entry name" value="Enolase"/>
</dbReference>
<dbReference type="InterPro" id="IPR036849">
    <property type="entry name" value="Enolase-like_C_sf"/>
</dbReference>
<dbReference type="InterPro" id="IPR029017">
    <property type="entry name" value="Enolase-like_N"/>
</dbReference>
<dbReference type="InterPro" id="IPR020810">
    <property type="entry name" value="Enolase_C"/>
</dbReference>
<dbReference type="InterPro" id="IPR020809">
    <property type="entry name" value="Enolase_CS"/>
</dbReference>
<dbReference type="InterPro" id="IPR020811">
    <property type="entry name" value="Enolase_N"/>
</dbReference>
<dbReference type="NCBIfam" id="TIGR01060">
    <property type="entry name" value="eno"/>
    <property type="match status" value="1"/>
</dbReference>
<dbReference type="PANTHER" id="PTHR11902">
    <property type="entry name" value="ENOLASE"/>
    <property type="match status" value="1"/>
</dbReference>
<dbReference type="PANTHER" id="PTHR11902:SF1">
    <property type="entry name" value="ENOLASE"/>
    <property type="match status" value="1"/>
</dbReference>
<dbReference type="Pfam" id="PF00113">
    <property type="entry name" value="Enolase_C"/>
    <property type="match status" value="1"/>
</dbReference>
<dbReference type="Pfam" id="PF03952">
    <property type="entry name" value="Enolase_N"/>
    <property type="match status" value="1"/>
</dbReference>
<dbReference type="PIRSF" id="PIRSF001400">
    <property type="entry name" value="Enolase"/>
    <property type="match status" value="1"/>
</dbReference>
<dbReference type="PRINTS" id="PR00148">
    <property type="entry name" value="ENOLASE"/>
</dbReference>
<dbReference type="SFLD" id="SFLDF00002">
    <property type="entry name" value="enolase"/>
    <property type="match status" value="1"/>
</dbReference>
<dbReference type="SFLD" id="SFLDG00178">
    <property type="entry name" value="enolase"/>
    <property type="match status" value="1"/>
</dbReference>
<dbReference type="SMART" id="SM01192">
    <property type="entry name" value="Enolase_C"/>
    <property type="match status" value="1"/>
</dbReference>
<dbReference type="SMART" id="SM01193">
    <property type="entry name" value="Enolase_N"/>
    <property type="match status" value="1"/>
</dbReference>
<dbReference type="SUPFAM" id="SSF51604">
    <property type="entry name" value="Enolase C-terminal domain-like"/>
    <property type="match status" value="1"/>
</dbReference>
<dbReference type="SUPFAM" id="SSF54826">
    <property type="entry name" value="Enolase N-terminal domain-like"/>
    <property type="match status" value="1"/>
</dbReference>
<dbReference type="PROSITE" id="PS00164">
    <property type="entry name" value="ENOLASE"/>
    <property type="match status" value="1"/>
</dbReference>
<proteinExistence type="evidence at transcript level"/>
<keyword id="KW-0007">Acetylation</keyword>
<keyword id="KW-1003">Cell membrane</keyword>
<keyword id="KW-0963">Cytoplasm</keyword>
<keyword id="KW-0206">Cytoskeleton</keyword>
<keyword id="KW-0324">Glycolysis</keyword>
<keyword id="KW-1017">Isopeptide bond</keyword>
<keyword id="KW-0456">Lyase</keyword>
<keyword id="KW-0460">Magnesium</keyword>
<keyword id="KW-0472">Membrane</keyword>
<keyword id="KW-0479">Metal-binding</keyword>
<keyword id="KW-0539">Nucleus</keyword>
<keyword id="KW-0597">Phosphoprotein</keyword>
<keyword id="KW-0832">Ubl conjugation</keyword>
<keyword id="KW-0926">Vacuole</keyword>
<sequence>MAHVITRINAREILDSRGNPTVEVDLETNLGIFRAAVPSGASTGIYEALELRDNDKSRYLGKGVQKAIKNINEIIAPKLIGMNCTEQKKIDNLMVEELDGSKNEWGWSKSKLGANAILAISMAVCRAGAAANKVSLYKYLAQLAGKKSDQMVLPVPCLNVINGGSHAGNKLSFQEFMIVPVGAPSFKEALRYGAEVYHTLKSEIKKKYGIDATNVGDEGGFAPNILNANEALDLLVTAIKSAGYEGKVKIAMDVAASEFYNSENKTYDLDFKTPNNDKSLVKTGAQLVDLYIDLVKKYPIVSIEDPFDQDDWENYAKLTAAIGKDVQIVGDDLLVTNPTRITKALEKNACNALPLKVNQIGSITEAIEACLLSQKNNWGVMVSHRSGETEDVFIADLVVALRTGQIKTGAPCRSERNAKYNQLLRIEESLGNNAVFAGEKFRLQLN</sequence>
<organism>
    <name type="scientific">Plasmodium falciparum (isolate FCR-3 / Gambia)</name>
    <dbReference type="NCBI Taxonomy" id="5838"/>
    <lineage>
        <taxon>Eukaryota</taxon>
        <taxon>Sar</taxon>
        <taxon>Alveolata</taxon>
        <taxon>Apicomplexa</taxon>
        <taxon>Aconoidasida</taxon>
        <taxon>Haemosporida</taxon>
        <taxon>Plasmodiidae</taxon>
        <taxon>Plasmodium</taxon>
        <taxon>Plasmodium (Laverania)</taxon>
    </lineage>
</organism>
<evidence type="ECO:0000250" key="1">
    <source>
        <dbReference type="UniProtKB" id="P06733"/>
    </source>
</evidence>
<evidence type="ECO:0000250" key="2">
    <source>
        <dbReference type="UniProtKB" id="Q7RA60"/>
    </source>
</evidence>
<evidence type="ECO:0000250" key="3">
    <source>
        <dbReference type="UniProtKB" id="Q8IJN7"/>
    </source>
</evidence>
<evidence type="ECO:0000250" key="4">
    <source>
        <dbReference type="UniProtKB" id="W7JLR6"/>
    </source>
</evidence>
<evidence type="ECO:0000303" key="5">
    <source ref="1"/>
</evidence>
<evidence type="ECO:0000305" key="6"/>
<comment type="function">
    <text evidence="4">Glycolytic enzyme that catalyzes the conversion of 2-phosphoglycerate to phosphoenolpyruvate (By similarity). In addition to glycolysis, involved in various processes such as parasite development and invasion (By similarity). Plays an essential role during ookinete invasion of the mosquito vector midgut by mediating the interaction of the ookinete with the midgut epithelium and, further, by binding to mammalian host plasminogen in the blood meal, whose conversion to active plasmin promotes the invasion process (By similarity).</text>
</comment>
<comment type="catalytic activity">
    <reaction evidence="4">
        <text>(2R)-2-phosphoglycerate = phosphoenolpyruvate + H2O</text>
        <dbReference type="Rhea" id="RHEA:10164"/>
        <dbReference type="ChEBI" id="CHEBI:15377"/>
        <dbReference type="ChEBI" id="CHEBI:58289"/>
        <dbReference type="ChEBI" id="CHEBI:58702"/>
        <dbReference type="EC" id="4.2.1.11"/>
    </reaction>
    <physiologicalReaction direction="left-to-right" evidence="4">
        <dbReference type="Rhea" id="RHEA:10165"/>
    </physiologicalReaction>
    <physiologicalReaction direction="right-to-left" evidence="4">
        <dbReference type="Rhea" id="RHEA:10166"/>
    </physiologicalReaction>
</comment>
<comment type="cofactor">
    <cofactor evidence="3">
        <name>Mg(2+)</name>
        <dbReference type="ChEBI" id="CHEBI:18420"/>
    </cofactor>
    <text evidence="3 4">Binds 2 Mg(2+) ions per subunit (By similarity). Mg(2+) is required for catalysis and for stabilizing the dimer (By similarity). Unlike for mammalian and yeast enolases, Mg(2+) is dispensable to form an active closed conformation (By similarity). Inhibited by high levels of Mg(2+) (By similarity).</text>
</comment>
<comment type="pathway">
    <text evidence="3">Carbohydrate degradation; glycolysis; pyruvate from D-glyceraldehyde 3-phosphate: step 4/5.</text>
</comment>
<comment type="subunit">
    <text evidence="3 4">Homodimer (By similarity). Forms a complex at least composed of DegP, ENO and HSP70 (By similarity). Interacts with G-actin (By similarity). Interacts (via the DKSLVK motif) with mammalian host PLG/plasminogen (present in the mosquito blood meal); the interaction occurs at the ookinete cell surface and is required for ookinete invasion of the mosquito midgut (By similarity). Interacts with A.gambiae EBP; depending on the Plasmodium species, the interaction is either involved in ookinete invasion of the mosquito midgut (P.berghei) or is dispensable (P.falciparum) (By similarity).</text>
</comment>
<comment type="subcellular location">
    <subcellularLocation>
        <location evidence="3">Cytoplasm</location>
    </subcellularLocation>
    <subcellularLocation>
        <location evidence="3">Nucleus</location>
    </subcellularLocation>
    <subcellularLocation>
        <location evidence="4">Cytoplasm</location>
        <location evidence="4">Cytoskeleton</location>
    </subcellularLocation>
    <subcellularLocation>
        <location evidence="3">Cell surface</location>
    </subcellularLocation>
    <subcellularLocation>
        <location evidence="2">Cell membrane</location>
        <topology evidence="6">Peripheral membrane protein</topology>
        <orientation evidence="2">Cytoplasmic side</orientation>
    </subcellularLocation>
    <subcellularLocation>
        <location evidence="3">Vacuole</location>
    </subcellularLocation>
    <text evidence="2 3 4">Partially localizes to the nucleus in rings and trophozoites. Localization to the nucleus and food vacuole is higher in early and mid-stage trophozoites compared to the late-stage trophozoites and schizonts (By similarity). In the nucleus, localizes to heterochromatin region (By similarity). In rings, nuclear localization is dependent on the actin cytoskeleton (By similarity). Localizes to the cell surface of merozoites (By similarity). In gametocytes, predominantly localizes to the actin cytoskeleton (By similarity). In the trophozoite food vacuole, colocalizes with hemozoin, a product of heme detoxification (By similarity). In sporozoites, localizes to punctate structures beneath the cell membrane (By similarity). Localizes to the cell surface of ookinetes, especially on the apical pellicle complex that is involved in invasion (By similarity). When phosphorylated at Thr-339, localizes to the cytoskeleton (By similarity). When phosphorylated at Ser-42, localizes to the cytoplasm (By similarity). When ubiquitinated at Lys-138, acetylated at Lys-133 and Lys-375 and phosphorylated at Tyr-139, localizes to the food vacuole (By similarity). When triubiquitinated at Lys-138, appears to colocalize with hemozoin in the food vacuole (By similarity).</text>
</comment>
<comment type="domain">
    <text evidence="3">The pentapeptide insert motif is required for the stabilization of the apo-enzyme in an active closed conformation, independently of Mg(2+) binding. The motif is also required for homodimerization. This motif is only present in Apicomplexa and plant enolases.</text>
</comment>
<comment type="domain">
    <text evidence="4">The DKSLVK motif binds to the lysine-binding Kringle domains of plasminogen from various mammalian species. This motif is present only in enolases of plant and several microbial pathogens including Plasmodium species.</text>
</comment>
<comment type="similarity">
    <text evidence="6">Belongs to the enolase family.</text>
</comment>
<reference key="1">
    <citation type="submission" date="1999-04" db="EMBL/GenBank/DDBJ databases">
        <title>Plasmodium falciparum enolase.</title>
        <authorList>
            <person name="Kawazu S."/>
            <person name="Hatabu T."/>
            <person name="Mizuno Y."/>
            <person name="Miyamoto K."/>
            <person name="Suzuki M."/>
            <person name="Kano S."/>
        </authorList>
    </citation>
    <scope>NUCLEOTIDE SEQUENCE [MRNA]</scope>
</reference>
<accession>Q9UAL5</accession>
<name>ENO_PLAFG</name>